<dbReference type="EMBL" id="CP001399">
    <property type="protein sequence ID" value="ACP35817.1"/>
    <property type="molecule type" value="Genomic_DNA"/>
</dbReference>
<dbReference type="RefSeq" id="WP_012711673.1">
    <property type="nucleotide sequence ID" value="NC_012589.1"/>
</dbReference>
<dbReference type="SMR" id="C3MR04"/>
<dbReference type="KEGG" id="sis:LS215_1821"/>
<dbReference type="HOGENOM" id="CLU_1275302_0_0_2"/>
<dbReference type="OrthoDB" id="7793at2157"/>
<dbReference type="Proteomes" id="UP000001747">
    <property type="component" value="Chromosome"/>
</dbReference>
<dbReference type="GO" id="GO:1990904">
    <property type="term" value="C:ribonucleoprotein complex"/>
    <property type="evidence" value="ECO:0007669"/>
    <property type="project" value="UniProtKB-KW"/>
</dbReference>
<dbReference type="GO" id="GO:0005840">
    <property type="term" value="C:ribosome"/>
    <property type="evidence" value="ECO:0007669"/>
    <property type="project" value="UniProtKB-KW"/>
</dbReference>
<dbReference type="GO" id="GO:0003735">
    <property type="term" value="F:structural constituent of ribosome"/>
    <property type="evidence" value="ECO:0007669"/>
    <property type="project" value="InterPro"/>
</dbReference>
<dbReference type="GO" id="GO:0006412">
    <property type="term" value="P:translation"/>
    <property type="evidence" value="ECO:0007669"/>
    <property type="project" value="UniProtKB-UniRule"/>
</dbReference>
<dbReference type="HAMAP" id="MF_00512">
    <property type="entry name" value="Ribosomal_eS6"/>
    <property type="match status" value="1"/>
</dbReference>
<dbReference type="InterPro" id="IPR001377">
    <property type="entry name" value="Ribosomal_eS6"/>
</dbReference>
<dbReference type="InterPro" id="IPR020924">
    <property type="entry name" value="Ribosomal_eS6_arc"/>
</dbReference>
<dbReference type="InterPro" id="IPR018282">
    <property type="entry name" value="Ribosomal_eS6_CS"/>
</dbReference>
<dbReference type="NCBIfam" id="NF003292">
    <property type="entry name" value="PRK04290.1-1"/>
    <property type="match status" value="1"/>
</dbReference>
<dbReference type="PANTHER" id="PTHR11502">
    <property type="entry name" value="40S RIBOSOMAL PROTEIN S6"/>
    <property type="match status" value="1"/>
</dbReference>
<dbReference type="Pfam" id="PF01092">
    <property type="entry name" value="Ribosomal_S6e"/>
    <property type="match status" value="1"/>
</dbReference>
<dbReference type="SMART" id="SM01405">
    <property type="entry name" value="Ribosomal_S6e"/>
    <property type="match status" value="1"/>
</dbReference>
<dbReference type="PROSITE" id="PS00578">
    <property type="entry name" value="RIBOSOMAL_S6E"/>
    <property type="match status" value="1"/>
</dbReference>
<evidence type="ECO:0000255" key="1">
    <source>
        <dbReference type="HAMAP-Rule" id="MF_00512"/>
    </source>
</evidence>
<evidence type="ECO:0000305" key="2"/>
<reference key="1">
    <citation type="journal article" date="2009" name="Proc. Natl. Acad. Sci. U.S.A.">
        <title>Biogeography of the Sulfolobus islandicus pan-genome.</title>
        <authorList>
            <person name="Reno M.L."/>
            <person name="Held N.L."/>
            <person name="Fields C.J."/>
            <person name="Burke P.V."/>
            <person name="Whitaker R.J."/>
        </authorList>
    </citation>
    <scope>NUCLEOTIDE SEQUENCE [LARGE SCALE GENOMIC DNA]</scope>
    <source>
        <strain>L.S.2.15 / Lassen #1</strain>
    </source>
</reference>
<accession>C3MR04</accession>
<organism>
    <name type="scientific">Saccharolobus islandicus (strain L.S.2.15 / Lassen #1)</name>
    <name type="common">Sulfolobus islandicus</name>
    <dbReference type="NCBI Taxonomy" id="429572"/>
    <lineage>
        <taxon>Archaea</taxon>
        <taxon>Thermoproteota</taxon>
        <taxon>Thermoprotei</taxon>
        <taxon>Sulfolobales</taxon>
        <taxon>Sulfolobaceae</taxon>
        <taxon>Saccharolobus</taxon>
    </lineage>
</organism>
<sequence>MPDFKIVISDPQSVEPKRIKVKVKANDQIKSIAGEKEGKAVPQAKVNEKTKQLLNIDTLITLEITKQEGDKKVKVKSHFKVEVDNNVPDNEVWISKTMAEKFGAEDFEAIAYRTKTLQISIDQDKATNLVGLKIGDTFEANQLIGLPVKLKITGGSDNSGFPMRFDVTGAAKRKILLSGPPGFYPNEDGERRRKTIRGNTISQEIVQINTIIVR</sequence>
<keyword id="KW-0687">Ribonucleoprotein</keyword>
<keyword id="KW-0689">Ribosomal protein</keyword>
<proteinExistence type="inferred from homology"/>
<comment type="similarity">
    <text evidence="1">Belongs to the eukaryotic ribosomal protein eS6 family.</text>
</comment>
<protein>
    <recommendedName>
        <fullName evidence="1">Small ribosomal subunit protein eS6</fullName>
    </recommendedName>
    <alternativeName>
        <fullName evidence="2">30S ribosomal protein S6e</fullName>
    </alternativeName>
</protein>
<gene>
    <name evidence="1" type="primary">rps6e</name>
    <name type="ordered locus">LS215_1821</name>
</gene>
<name>RS6E_SACI2</name>
<feature type="chain" id="PRO_1000206624" description="Small ribosomal subunit protein eS6">
    <location>
        <begin position="1"/>
        <end position="214"/>
    </location>
</feature>